<dbReference type="EMBL" id="S64501">
    <property type="protein sequence ID" value="AAB27738.1"/>
    <property type="molecule type" value="Genomic_DNA"/>
</dbReference>
<dbReference type="EMBL" id="U75930">
    <property type="protein sequence ID" value="AAC59148.1"/>
    <property type="molecule type" value="Genomic_DNA"/>
</dbReference>
<dbReference type="PIR" id="JQ2218">
    <property type="entry name" value="JQ2218"/>
</dbReference>
<dbReference type="RefSeq" id="NP_046305.1">
    <property type="nucleotide sequence ID" value="NC_001875.2"/>
</dbReference>
<dbReference type="SMR" id="P41724"/>
<dbReference type="KEGG" id="vg:912109"/>
<dbReference type="Proteomes" id="UP000009248">
    <property type="component" value="Genome"/>
</dbReference>
<gene>
    <name type="primary">P8.9</name>
    <name type="ORF">ORF149</name>
</gene>
<proteinExistence type="predicted"/>
<organismHost>
    <name type="scientific">Orgyia pseudotsugata</name>
    <name type="common">Douglas-fir tussock moth</name>
    <dbReference type="NCBI Taxonomy" id="33414"/>
</organismHost>
<feature type="chain" id="PRO_0000132878" description="8.9 kDa basic protein">
    <location>
        <begin position="1"/>
        <end position="75"/>
    </location>
</feature>
<accession>P41724</accession>
<sequence length="75" mass="8986">MNSWQKIRMAKQQQVRVARQHRAAKLGRLYKAKKLRAELCEKLQLQRVNNDAALAKAFEEEFVYPHFSFYLYTLN</sequence>
<name>VP09_NPVOP</name>
<protein>
    <recommendedName>
        <fullName>8.9 kDa basic protein</fullName>
    </recommendedName>
</protein>
<organism>
    <name type="scientific">Orgyia pseudotsugata multicapsid polyhedrosis virus</name>
    <name type="common">OpMNPV</name>
    <dbReference type="NCBI Taxonomy" id="262177"/>
    <lineage>
        <taxon>Viruses</taxon>
        <taxon>Viruses incertae sedis</taxon>
        <taxon>Naldaviricetes</taxon>
        <taxon>Lefavirales</taxon>
        <taxon>Baculoviridae</taxon>
        <taxon>Alphabaculovirus</taxon>
        <taxon>Alphabaculovirus orpseudotsugatae</taxon>
    </lineage>
</organism>
<reference key="1">
    <citation type="journal article" date="1993" name="J. Gen. Virol.">
        <title>Characterization of an early gene coding for a highly basic 8.9K protein from the Orgyia pseudotsugata multicapsid nuclear polyhedrosis virus.</title>
        <authorList>
            <person name="Wu X."/>
            <person name="Stewart S."/>
            <person name="Theilmann D.A."/>
        </authorList>
    </citation>
    <scope>NUCLEOTIDE SEQUENCE [GENOMIC DNA]</scope>
</reference>
<reference key="2">
    <citation type="journal article" date="1997" name="Virology">
        <title>The sequence of the Orgyia pseudotsugata multinucleocapsid nuclear polyhedrosis virus genome.</title>
        <authorList>
            <person name="Ahrens C.H."/>
            <person name="Russell R.R."/>
            <person name="Funk C.J."/>
            <person name="Evans J."/>
            <person name="Harwood S."/>
            <person name="Rohrmann G.F."/>
        </authorList>
    </citation>
    <scope>NUCLEOTIDE SEQUENCE [LARGE SCALE GENOMIC DNA]</scope>
</reference>
<keyword id="KW-0244">Early protein</keyword>
<keyword id="KW-1185">Reference proteome</keyword>